<sequence>MSNDEGETFATEQTTQQVFQKLGSNMENRVCFDCGNKNPTWTSVPFGVMLCIQCSAVHRNMGVHITFVKSSTLDKWTINNLRRFKLGGNHKARDFFLKNNGKQLLNTANVDAKTKYTSPVAKKYKIHLDKKVQKDMELYPSELVLNGQDSSDSPLDTDSDASRSTSKENSVDDFFSNWQKPSSNSSSKLNVNTGSLAPKNNTTGSTPKTTVTKTRSSILTASRKKPVLNSQDKKKHSILSSSRKPTRLTAKKVDKSQAEDLFDQFKKEAQQEKEDEFTNSSSSTKIRQNDYDSQFMNNSKGNNNNSIDDINTQPDEFNDFLNDTSNSFDTTRKEQQDTLTPKFAKLGFGMTMNDANDLAKQQKESQKIAQGPRYTGRIAERYGTQKAISSDQLFGRGSFDEAANREAHDKLKTFDNATSISSSSYFGEDKEVDEFGNPINSSGSGAGNFDGRNSNNGFIDFNASADDELQMLRDVVEQGAEKLGSYLRDYLRK</sequence>
<keyword id="KW-0002">3D-structure</keyword>
<keyword id="KW-0333">Golgi apparatus</keyword>
<keyword id="KW-0343">GTPase activation</keyword>
<keyword id="KW-0479">Metal-binding</keyword>
<keyword id="KW-0597">Phosphoprotein</keyword>
<keyword id="KW-0653">Protein transport</keyword>
<keyword id="KW-1185">Reference proteome</keyword>
<keyword id="KW-0813">Transport</keyword>
<keyword id="KW-0862">Zinc</keyword>
<keyword id="KW-0863">Zinc-finger</keyword>
<comment type="function">
    <text evidence="5">GTPase-activating protein for the ADP ribosylation factor (ARF) family. Involved in retrograde vesicular transport from the Golgi to the endoplasmic reticulum.</text>
</comment>
<comment type="subcellular location">
    <subcellularLocation>
        <location evidence="3">Golgi apparatus</location>
    </subcellularLocation>
</comment>
<comment type="miscellaneous">
    <text evidence="4">Present with 1510 molecules/cell in log phase SD medium.</text>
</comment>
<proteinExistence type="evidence at protein level"/>
<organism>
    <name type="scientific">Saccharomyces cerevisiae (strain ATCC 204508 / S288c)</name>
    <name type="common">Baker's yeast</name>
    <dbReference type="NCBI Taxonomy" id="559292"/>
    <lineage>
        <taxon>Eukaryota</taxon>
        <taxon>Fungi</taxon>
        <taxon>Dikarya</taxon>
        <taxon>Ascomycota</taxon>
        <taxon>Saccharomycotina</taxon>
        <taxon>Saccharomycetes</taxon>
        <taxon>Saccharomycetales</taxon>
        <taxon>Saccharomycetaceae</taxon>
        <taxon>Saccharomyces</taxon>
    </lineage>
</organism>
<dbReference type="EMBL" id="X79514">
    <property type="protein sequence ID" value="CAA56046.1"/>
    <property type="molecule type" value="Genomic_DNA"/>
</dbReference>
<dbReference type="EMBL" id="U18916">
    <property type="protein sequence ID" value="AAC03220.1"/>
    <property type="molecule type" value="Genomic_DNA"/>
</dbReference>
<dbReference type="EMBL" id="BK006939">
    <property type="protein sequence ID" value="DAA07782.1"/>
    <property type="molecule type" value="Genomic_DNA"/>
</dbReference>
<dbReference type="PIR" id="S50625">
    <property type="entry name" value="S50625"/>
</dbReference>
<dbReference type="RefSeq" id="NP_011048.1">
    <property type="nucleotide sequence ID" value="NM_001179012.1"/>
</dbReference>
<dbReference type="PDB" id="7JTZ">
    <property type="method" value="X-ray"/>
    <property type="resolution" value="2.07 A"/>
    <property type="chains" value="A/B/C/D=1-150"/>
</dbReference>
<dbReference type="PDBsum" id="7JTZ"/>
<dbReference type="SMR" id="P38682"/>
<dbReference type="BioGRID" id="36866">
    <property type="interactions" value="535"/>
</dbReference>
<dbReference type="DIP" id="DIP-2740N"/>
<dbReference type="FunCoup" id="P38682">
    <property type="interactions" value="830"/>
</dbReference>
<dbReference type="IntAct" id="P38682">
    <property type="interactions" value="13"/>
</dbReference>
<dbReference type="MINT" id="P38682"/>
<dbReference type="STRING" id="4932.YER122C"/>
<dbReference type="iPTMnet" id="P38682"/>
<dbReference type="PaxDb" id="4932-YER122C"/>
<dbReference type="PeptideAtlas" id="P38682"/>
<dbReference type="EnsemblFungi" id="YER122C_mRNA">
    <property type="protein sequence ID" value="YER122C"/>
    <property type="gene ID" value="YER122C"/>
</dbReference>
<dbReference type="GeneID" id="856859"/>
<dbReference type="KEGG" id="sce:YER122C"/>
<dbReference type="AGR" id="SGD:S000000924"/>
<dbReference type="SGD" id="S000000924">
    <property type="gene designation" value="GLO3"/>
</dbReference>
<dbReference type="VEuPathDB" id="FungiDB:YER122C"/>
<dbReference type="eggNOG" id="KOG0706">
    <property type="taxonomic scope" value="Eukaryota"/>
</dbReference>
<dbReference type="GeneTree" id="ENSGT00940000173235"/>
<dbReference type="HOGENOM" id="CLU_023062_7_0_1"/>
<dbReference type="InParanoid" id="P38682"/>
<dbReference type="OMA" id="PANQVCF"/>
<dbReference type="OrthoDB" id="983479at2759"/>
<dbReference type="BioCyc" id="YEAST:G3O-30286-MONOMER"/>
<dbReference type="Reactome" id="R-SCE-6807878">
    <property type="pathway name" value="COPI-mediated anterograde transport"/>
</dbReference>
<dbReference type="Reactome" id="R-SCE-6811434">
    <property type="pathway name" value="COPI-dependent Golgi-to-ER retrograde traffic"/>
</dbReference>
<dbReference type="BioGRID-ORCS" id="856859">
    <property type="hits" value="1 hit in 10 CRISPR screens"/>
</dbReference>
<dbReference type="PRO" id="PR:P38682"/>
<dbReference type="Proteomes" id="UP000002311">
    <property type="component" value="Chromosome V"/>
</dbReference>
<dbReference type="RNAct" id="P38682">
    <property type="molecule type" value="protein"/>
</dbReference>
<dbReference type="GO" id="GO:0030126">
    <property type="term" value="C:COPI vesicle coat"/>
    <property type="evidence" value="ECO:0000353"/>
    <property type="project" value="SGD"/>
</dbReference>
<dbReference type="GO" id="GO:0030137">
    <property type="term" value="C:COPI-coated vesicle"/>
    <property type="evidence" value="ECO:0000314"/>
    <property type="project" value="SGD"/>
</dbReference>
<dbReference type="GO" id="GO:0000139">
    <property type="term" value="C:Golgi membrane"/>
    <property type="evidence" value="ECO:0007669"/>
    <property type="project" value="GOC"/>
</dbReference>
<dbReference type="GO" id="GO:0005096">
    <property type="term" value="F:GTPase activator activity"/>
    <property type="evidence" value="ECO:0000314"/>
    <property type="project" value="SGD"/>
</dbReference>
<dbReference type="GO" id="GO:0008270">
    <property type="term" value="F:zinc ion binding"/>
    <property type="evidence" value="ECO:0007669"/>
    <property type="project" value="UniProtKB-KW"/>
</dbReference>
<dbReference type="GO" id="GO:0048205">
    <property type="term" value="P:COPI coating of Golgi vesicle"/>
    <property type="evidence" value="ECO:0000314"/>
    <property type="project" value="SGD"/>
</dbReference>
<dbReference type="GO" id="GO:0006888">
    <property type="term" value="P:endoplasmic reticulum to Golgi vesicle-mediated transport"/>
    <property type="evidence" value="ECO:0000315"/>
    <property type="project" value="SGD"/>
</dbReference>
<dbReference type="GO" id="GO:0015031">
    <property type="term" value="P:protein transport"/>
    <property type="evidence" value="ECO:0007669"/>
    <property type="project" value="UniProtKB-KW"/>
</dbReference>
<dbReference type="GO" id="GO:0006890">
    <property type="term" value="P:retrograde vesicle-mediated transport, Golgi to endoplasmic reticulum"/>
    <property type="evidence" value="ECO:0000314"/>
    <property type="project" value="SGD"/>
</dbReference>
<dbReference type="CDD" id="cd08831">
    <property type="entry name" value="ArfGap_ArfGap2_3_like"/>
    <property type="match status" value="1"/>
</dbReference>
<dbReference type="Gene3D" id="1.10.220.150">
    <property type="entry name" value="Arf GTPase activating protein"/>
    <property type="match status" value="1"/>
</dbReference>
<dbReference type="InterPro" id="IPR037278">
    <property type="entry name" value="ARFGAP/RecO"/>
</dbReference>
<dbReference type="InterPro" id="IPR001164">
    <property type="entry name" value="ArfGAP_dom"/>
</dbReference>
<dbReference type="InterPro" id="IPR038508">
    <property type="entry name" value="ArfGAP_dom_sf"/>
</dbReference>
<dbReference type="PANTHER" id="PTHR45686:SF4">
    <property type="entry name" value="ADP-RIBOSYLATION FACTOR GTPASE ACTIVATING PROTEIN 3, ISOFORM H"/>
    <property type="match status" value="1"/>
</dbReference>
<dbReference type="PANTHER" id="PTHR45686">
    <property type="entry name" value="ADP-RIBOSYLATION FACTOR GTPASE ACTIVATING PROTEIN 3, ISOFORM H-RELATED"/>
    <property type="match status" value="1"/>
</dbReference>
<dbReference type="Pfam" id="PF01412">
    <property type="entry name" value="ArfGap"/>
    <property type="match status" value="1"/>
</dbReference>
<dbReference type="PRINTS" id="PR00405">
    <property type="entry name" value="REVINTRACTNG"/>
</dbReference>
<dbReference type="SMART" id="SM00105">
    <property type="entry name" value="ArfGap"/>
    <property type="match status" value="1"/>
</dbReference>
<dbReference type="SUPFAM" id="SSF57863">
    <property type="entry name" value="ArfGap/RecO-like zinc finger"/>
    <property type="match status" value="1"/>
</dbReference>
<dbReference type="PROSITE" id="PS50115">
    <property type="entry name" value="ARFGAP"/>
    <property type="match status" value="1"/>
</dbReference>
<feature type="chain" id="PRO_0000074225" description="ADP-ribosylation factor GTPase-activating protein GLO3">
    <location>
        <begin position="1"/>
        <end position="493"/>
    </location>
</feature>
<feature type="domain" description="Arf-GAP" evidence="1">
    <location>
        <begin position="16"/>
        <end position="137"/>
    </location>
</feature>
<feature type="zinc finger region" description="C4-type" evidence="1">
    <location>
        <begin position="31"/>
        <end position="54"/>
    </location>
</feature>
<feature type="region of interest" description="Disordered" evidence="2">
    <location>
        <begin position="145"/>
        <end position="255"/>
    </location>
</feature>
<feature type="region of interest" description="Disordered" evidence="2">
    <location>
        <begin position="268"/>
        <end position="338"/>
    </location>
</feature>
<feature type="compositionally biased region" description="Low complexity" evidence="2">
    <location>
        <begin position="176"/>
        <end position="192"/>
    </location>
</feature>
<feature type="compositionally biased region" description="Low complexity" evidence="2">
    <location>
        <begin position="199"/>
        <end position="217"/>
    </location>
</feature>
<feature type="compositionally biased region" description="Polar residues" evidence="2">
    <location>
        <begin position="278"/>
        <end position="296"/>
    </location>
</feature>
<feature type="compositionally biased region" description="Low complexity" evidence="2">
    <location>
        <begin position="297"/>
        <end position="311"/>
    </location>
</feature>
<feature type="modified residue" description="Phosphoserine" evidence="9">
    <location>
        <position position="170"/>
    </location>
</feature>
<feature type="modified residue" description="Phosphoserine" evidence="8 9">
    <location>
        <position position="306"/>
    </location>
</feature>
<feature type="modified residue" description="Phosphoserine" evidence="9">
    <location>
        <position position="389"/>
    </location>
</feature>
<feature type="modified residue" description="Phosphoserine" evidence="7 8 9">
    <location>
        <position position="398"/>
    </location>
</feature>
<feature type="sequence conflict" description="In Ref. 1; CAA56046." evidence="6" ref="1">
    <original>S</original>
    <variation>C</variation>
    <location>
        <position position="222"/>
    </location>
</feature>
<feature type="sequence conflict" description="In Ref. 1; CAA56046." evidence="6" ref="1">
    <original>EAHDKLKTFDNATSISSSSYFGEDKEVDEFGNPINSSGSGAGNFDGRNSNNGFIDFNASADDELQMLRDVVEQGAEKLGSYLRDYLRK</original>
    <variation>GSA</variation>
    <location>
        <begin position="406"/>
        <end position="493"/>
    </location>
</feature>
<feature type="helix" evidence="10">
    <location>
        <begin position="5"/>
        <end position="7"/>
    </location>
</feature>
<feature type="helix" evidence="10">
    <location>
        <begin position="12"/>
        <end position="22"/>
    </location>
</feature>
<feature type="helix" evidence="10">
    <location>
        <begin position="26"/>
        <end position="29"/>
    </location>
</feature>
<feature type="turn" evidence="10">
    <location>
        <begin position="32"/>
        <end position="34"/>
    </location>
</feature>
<feature type="strand" evidence="10">
    <location>
        <begin position="41"/>
        <end position="43"/>
    </location>
</feature>
<feature type="turn" evidence="10">
    <location>
        <begin position="44"/>
        <end position="47"/>
    </location>
</feature>
<feature type="strand" evidence="10">
    <location>
        <begin position="48"/>
        <end position="50"/>
    </location>
</feature>
<feature type="helix" evidence="10">
    <location>
        <begin position="52"/>
        <end position="61"/>
    </location>
</feature>
<feature type="turn" evidence="10">
    <location>
        <begin position="63"/>
        <end position="65"/>
    </location>
</feature>
<feature type="strand" evidence="10">
    <location>
        <begin position="68"/>
        <end position="70"/>
    </location>
</feature>
<feature type="turn" evidence="10">
    <location>
        <begin position="71"/>
        <end position="73"/>
    </location>
</feature>
<feature type="helix" evidence="10">
    <location>
        <begin position="78"/>
        <end position="85"/>
    </location>
</feature>
<feature type="helix" evidence="10">
    <location>
        <begin position="89"/>
        <end position="98"/>
    </location>
</feature>
<feature type="helix" evidence="10">
    <location>
        <begin position="102"/>
        <end position="105"/>
    </location>
</feature>
<feature type="strand" evidence="10">
    <location>
        <begin position="107"/>
        <end position="109"/>
    </location>
</feature>
<feature type="helix" evidence="10">
    <location>
        <begin position="112"/>
        <end position="117"/>
    </location>
</feature>
<feature type="helix" evidence="10">
    <location>
        <begin position="119"/>
        <end position="138"/>
    </location>
</feature>
<reference key="1">
    <citation type="journal article" date="1994" name="EMBO J.">
        <title>A member of a novel family of yeast 'Zn-finger' proteins mediates the transition from stationary phase to cell proliferation.</title>
        <authorList>
            <person name="Ireland L.S."/>
            <person name="Johnston G.C."/>
            <person name="Drebot M.A."/>
            <person name="Dhillon N."/>
            <person name="Demaggio A.J."/>
            <person name="Hoekstra M.F."/>
            <person name="Singer R.A."/>
        </authorList>
    </citation>
    <scope>NUCLEOTIDE SEQUENCE [GENOMIC DNA]</scope>
</reference>
<reference key="2">
    <citation type="journal article" date="1997" name="Nature">
        <title>The nucleotide sequence of Saccharomyces cerevisiae chromosome V.</title>
        <authorList>
            <person name="Dietrich F.S."/>
            <person name="Mulligan J.T."/>
            <person name="Hennessy K.M."/>
            <person name="Yelton M.A."/>
            <person name="Allen E."/>
            <person name="Araujo R."/>
            <person name="Aviles E."/>
            <person name="Berno A."/>
            <person name="Brennan T."/>
            <person name="Carpenter J."/>
            <person name="Chen E."/>
            <person name="Cherry J.M."/>
            <person name="Chung E."/>
            <person name="Duncan M."/>
            <person name="Guzman E."/>
            <person name="Hartzell G."/>
            <person name="Hunicke-Smith S."/>
            <person name="Hyman R.W."/>
            <person name="Kayser A."/>
            <person name="Komp C."/>
            <person name="Lashkari D."/>
            <person name="Lew H."/>
            <person name="Lin D."/>
            <person name="Mosedale D."/>
            <person name="Nakahara K."/>
            <person name="Namath A."/>
            <person name="Norgren R."/>
            <person name="Oefner P."/>
            <person name="Oh C."/>
            <person name="Petel F.X."/>
            <person name="Roberts D."/>
            <person name="Sehl P."/>
            <person name="Schramm S."/>
            <person name="Shogren T."/>
            <person name="Smith V."/>
            <person name="Taylor P."/>
            <person name="Wei Y."/>
            <person name="Botstein D."/>
            <person name="Davis R.W."/>
        </authorList>
    </citation>
    <scope>NUCLEOTIDE SEQUENCE [LARGE SCALE GENOMIC DNA]</scope>
    <source>
        <strain>ATCC 204508 / S288c</strain>
    </source>
</reference>
<reference key="3">
    <citation type="journal article" date="2014" name="G3 (Bethesda)">
        <title>The reference genome sequence of Saccharomyces cerevisiae: Then and now.</title>
        <authorList>
            <person name="Engel S.R."/>
            <person name="Dietrich F.S."/>
            <person name="Fisk D.G."/>
            <person name="Binkley G."/>
            <person name="Balakrishnan R."/>
            <person name="Costanzo M.C."/>
            <person name="Dwight S.S."/>
            <person name="Hitz B.C."/>
            <person name="Karra K."/>
            <person name="Nash R.S."/>
            <person name="Weng S."/>
            <person name="Wong E.D."/>
            <person name="Lloyd P."/>
            <person name="Skrzypek M.S."/>
            <person name="Miyasato S.R."/>
            <person name="Simison M."/>
            <person name="Cherry J.M."/>
        </authorList>
    </citation>
    <scope>GENOME REANNOTATION</scope>
    <source>
        <strain>ATCC 204508 / S288c</strain>
    </source>
</reference>
<reference key="4">
    <citation type="journal article" date="1999" name="EMBO J.">
        <title>Retrograde transport from the yeast Golgi is mediated by two ARF GAP proteins with overlapping function.</title>
        <authorList>
            <person name="Poon P.P."/>
            <person name="Cassel D."/>
            <person name="Spang A."/>
            <person name="Rotman M."/>
            <person name="Pick E."/>
            <person name="Singer R.A."/>
            <person name="Johnston G.C."/>
        </authorList>
    </citation>
    <scope>FUNCTION</scope>
</reference>
<reference key="5">
    <citation type="journal article" date="2003" name="Nature">
        <title>Global analysis of protein localization in budding yeast.</title>
        <authorList>
            <person name="Huh W.-K."/>
            <person name="Falvo J.V."/>
            <person name="Gerke L.C."/>
            <person name="Carroll A.S."/>
            <person name="Howson R.W."/>
            <person name="Weissman J.S."/>
            <person name="O'Shea E.K."/>
        </authorList>
    </citation>
    <scope>SUBCELLULAR LOCATION [LARGE SCALE ANALYSIS]</scope>
</reference>
<reference key="6">
    <citation type="journal article" date="2003" name="Nature">
        <title>Global analysis of protein expression in yeast.</title>
        <authorList>
            <person name="Ghaemmaghami S."/>
            <person name="Huh W.-K."/>
            <person name="Bower K."/>
            <person name="Howson R.W."/>
            <person name="Belle A."/>
            <person name="Dephoure N."/>
            <person name="O'Shea E.K."/>
            <person name="Weissman J.S."/>
        </authorList>
    </citation>
    <scope>LEVEL OF PROTEIN EXPRESSION [LARGE SCALE ANALYSIS]</scope>
</reference>
<reference key="7">
    <citation type="journal article" date="2005" name="Mol. Cell. Proteomics">
        <title>Quantitative phosphoproteomics applied to the yeast pheromone signaling pathway.</title>
        <authorList>
            <person name="Gruhler A."/>
            <person name="Olsen J.V."/>
            <person name="Mohammed S."/>
            <person name="Mortensen P."/>
            <person name="Faergeman N.J."/>
            <person name="Mann M."/>
            <person name="Jensen O.N."/>
        </authorList>
    </citation>
    <scope>IDENTIFICATION BY MASS SPECTROMETRY [LARGE SCALE ANALYSIS]</scope>
    <source>
        <strain>YAL6B</strain>
    </source>
</reference>
<reference key="8">
    <citation type="journal article" date="2007" name="J. Proteome Res.">
        <title>Large-scale phosphorylation analysis of alpha-factor-arrested Saccharomyces cerevisiae.</title>
        <authorList>
            <person name="Li X."/>
            <person name="Gerber S.A."/>
            <person name="Rudner A.D."/>
            <person name="Beausoleil S.A."/>
            <person name="Haas W."/>
            <person name="Villen J."/>
            <person name="Elias J.E."/>
            <person name="Gygi S.P."/>
        </authorList>
    </citation>
    <scope>PHOSPHORYLATION [LARGE SCALE ANALYSIS] AT SER-398</scope>
    <scope>IDENTIFICATION BY MASS SPECTROMETRY [LARGE SCALE ANALYSIS]</scope>
    <source>
        <strain>ADR376</strain>
    </source>
</reference>
<reference key="9">
    <citation type="journal article" date="2007" name="Proc. Natl. Acad. Sci. U.S.A.">
        <title>Analysis of phosphorylation sites on proteins from Saccharomyces cerevisiae by electron transfer dissociation (ETD) mass spectrometry.</title>
        <authorList>
            <person name="Chi A."/>
            <person name="Huttenhower C."/>
            <person name="Geer L.Y."/>
            <person name="Coon J.J."/>
            <person name="Syka J.E.P."/>
            <person name="Bai D.L."/>
            <person name="Shabanowitz J."/>
            <person name="Burke D.J."/>
            <person name="Troyanskaya O.G."/>
            <person name="Hunt D.F."/>
        </authorList>
    </citation>
    <scope>IDENTIFICATION BY MASS SPECTROMETRY [LARGE SCALE ANALYSIS]</scope>
</reference>
<reference key="10">
    <citation type="journal article" date="2008" name="Mol. Cell. Proteomics">
        <title>A multidimensional chromatography technology for in-depth phosphoproteome analysis.</title>
        <authorList>
            <person name="Albuquerque C.P."/>
            <person name="Smolka M.B."/>
            <person name="Payne S.H."/>
            <person name="Bafna V."/>
            <person name="Eng J."/>
            <person name="Zhou H."/>
        </authorList>
    </citation>
    <scope>PHOSPHORYLATION [LARGE SCALE ANALYSIS] AT SER-306 AND SER-398</scope>
    <scope>IDENTIFICATION BY MASS SPECTROMETRY [LARGE SCALE ANALYSIS]</scope>
</reference>
<reference key="11">
    <citation type="journal article" date="2009" name="Science">
        <title>Global analysis of Cdk1 substrate phosphorylation sites provides insights into evolution.</title>
        <authorList>
            <person name="Holt L.J."/>
            <person name="Tuch B.B."/>
            <person name="Villen J."/>
            <person name="Johnson A.D."/>
            <person name="Gygi S.P."/>
            <person name="Morgan D.O."/>
        </authorList>
    </citation>
    <scope>PHOSPHORYLATION [LARGE SCALE ANALYSIS] AT SER-170; SER-306; SER-389 AND SER-398</scope>
    <scope>IDENTIFICATION BY MASS SPECTROMETRY [LARGE SCALE ANALYSIS]</scope>
</reference>
<reference key="12">
    <citation type="journal article" date="2012" name="Proc. Natl. Acad. Sci. U.S.A.">
        <title>N-terminal acetylome analyses and functional insights of the N-terminal acetyltransferase NatB.</title>
        <authorList>
            <person name="Van Damme P."/>
            <person name="Lasa M."/>
            <person name="Polevoda B."/>
            <person name="Gazquez C."/>
            <person name="Elosegui-Artola A."/>
            <person name="Kim D.S."/>
            <person name="De Juan-Pardo E."/>
            <person name="Demeyer K."/>
            <person name="Hole K."/>
            <person name="Larrea E."/>
            <person name="Timmerman E."/>
            <person name="Prieto J."/>
            <person name="Arnesen T."/>
            <person name="Sherman F."/>
            <person name="Gevaert K."/>
            <person name="Aldabe R."/>
        </authorList>
    </citation>
    <scope>IDENTIFICATION BY MASS SPECTROMETRY [LARGE SCALE ANALYSIS]</scope>
</reference>
<accession>P38682</accession>
<accession>D3DM28</accession>
<protein>
    <recommendedName>
        <fullName>ADP-ribosylation factor GTPase-activating protein GLO3</fullName>
        <shortName>ARF GAP GLO3</shortName>
    </recommendedName>
</protein>
<evidence type="ECO:0000255" key="1">
    <source>
        <dbReference type="PROSITE-ProRule" id="PRU00288"/>
    </source>
</evidence>
<evidence type="ECO:0000256" key="2">
    <source>
        <dbReference type="SAM" id="MobiDB-lite"/>
    </source>
</evidence>
<evidence type="ECO:0000269" key="3">
    <source>
    </source>
</evidence>
<evidence type="ECO:0000269" key="4">
    <source>
    </source>
</evidence>
<evidence type="ECO:0000269" key="5">
    <source>
    </source>
</evidence>
<evidence type="ECO:0000305" key="6"/>
<evidence type="ECO:0007744" key="7">
    <source>
    </source>
</evidence>
<evidence type="ECO:0007744" key="8">
    <source>
    </source>
</evidence>
<evidence type="ECO:0007744" key="9">
    <source>
    </source>
</evidence>
<evidence type="ECO:0007829" key="10">
    <source>
        <dbReference type="PDB" id="7JTZ"/>
    </source>
</evidence>
<gene>
    <name type="primary">GLO3</name>
    <name type="ordered locus">YER122C</name>
</gene>
<name>GLO3_YEAST</name>